<gene>
    <name type="primary">OPG057</name>
    <name type="ORF">C17L</name>
    <name type="ORF">F13L</name>
</gene>
<organism>
    <name type="scientific">Variola virus (isolate Human/India/Ind3/1967)</name>
    <name type="common">VARV</name>
    <name type="synonym">Smallpox virus</name>
    <dbReference type="NCBI Taxonomy" id="587200"/>
    <lineage>
        <taxon>Viruses</taxon>
        <taxon>Varidnaviria</taxon>
        <taxon>Bamfordvirae</taxon>
        <taxon>Nucleocytoviricota</taxon>
        <taxon>Pokkesviricetes</taxon>
        <taxon>Chitovirales</taxon>
        <taxon>Poxviridae</taxon>
        <taxon>Chordopoxvirinae</taxon>
        <taxon>Orthopoxvirus</taxon>
        <taxon>Variola virus</taxon>
    </lineage>
</organism>
<keyword id="KW-1038">Host endoplasmic reticulum</keyword>
<keyword id="KW-1040">Host Golgi apparatus</keyword>
<keyword id="KW-1043">Host membrane</keyword>
<keyword id="KW-0945">Host-virus interaction</keyword>
<keyword id="KW-0378">Hydrolase</keyword>
<keyword id="KW-0426">Late protein</keyword>
<keyword id="KW-0449">Lipoprotein</keyword>
<keyword id="KW-0472">Membrane</keyword>
<keyword id="KW-0564">Palmitate</keyword>
<keyword id="KW-1185">Reference proteome</keyword>
<keyword id="KW-1198">Viral budding</keyword>
<keyword id="KW-1187">Viral budding via the host ESCRT complexes</keyword>
<keyword id="KW-0261">Viral envelope protein</keyword>
<keyword id="KW-1188">Viral release from host cell</keyword>
<keyword id="KW-0946">Virion</keyword>
<feature type="chain" id="PRO_0000099199" description="Envelope phospholipase OPG057">
    <location>
        <begin position="1"/>
        <end position="372"/>
    </location>
</feature>
<feature type="domain" description="PLD phosphodiesterase" evidence="2">
    <location>
        <begin position="307"/>
        <end position="334"/>
    </location>
</feature>
<feature type="short sequence motif" description="YPPL">
    <location>
        <begin position="153"/>
        <end position="156"/>
    </location>
</feature>
<feature type="lipid moiety-binding region" description="S-palmitoyl cysteine; by host" evidence="1">
    <location>
        <position position="185"/>
    </location>
</feature>
<feature type="lipid moiety-binding region" description="S-palmitoyl cysteine; by host" evidence="1">
    <location>
        <position position="186"/>
    </location>
</feature>
<reference key="1">
    <citation type="journal article" date="1993" name="Virus Res.">
        <title>Analysis of the nucleotide sequence of a 43 kbp segment of the genome of variola virus India-1967 strain.</title>
        <authorList>
            <person name="Shchelkunov S.N."/>
            <person name="Blinov V.M."/>
            <person name="Resenchuk S.M."/>
            <person name="Totmenin A.V."/>
            <person name="Sandakhchiev L.S."/>
        </authorList>
    </citation>
    <scope>NUCLEOTIDE SEQUENCE [GENOMIC DNA]</scope>
    <source>
        <strain>India-1967 / Isolate Ind3</strain>
    </source>
</reference>
<reference key="2">
    <citation type="journal article" date="1993" name="FEBS Lett.">
        <title>Genes of variola and vaccinia viruses necessary to overcome the host protective mechanisms.</title>
        <authorList>
            <person name="Shchelkunov S.N."/>
            <person name="Blinov V.M."/>
            <person name="Sandakhchiev L.S."/>
        </authorList>
    </citation>
    <scope>NUCLEOTIDE SEQUENCE [GENOMIC DNA]</scope>
    <source>
        <strain>India-1967 / Isolate Ind3</strain>
    </source>
</reference>
<name>PG057_VAR67</name>
<protein>
    <recommendedName>
        <fullName>Envelope phospholipase OPG057</fullName>
        <ecNumber evidence="1">3.1.1.-</ecNumber>
        <ecNumber evidence="1">3.1.4.4</ecNumber>
    </recommendedName>
    <alternativeName>
        <fullName>37 kDa protein</fullName>
    </alternativeName>
    <alternativeName>
        <fullName>Envelope protein F13</fullName>
    </alternativeName>
    <alternativeName>
        <fullName>Palmitoylated EV membrane protein</fullName>
    </alternativeName>
    <alternativeName>
        <fullName>p37K</fullName>
    </alternativeName>
</protein>
<accession>P33815</accession>
<sequence length="372" mass="41903">MWPFTSAPAGAKCRLVETLPENMDFRSDHLTTFECFNEIITLAKKYIYIASFCCNPLSTTRGALIFDKLKEASEKGIKIIVLLDERGKRNLGELQSHCPDINFITVNIDKKNNVGLLLGCFWVSDDERCYVGNASFTGGSIHTIKTLGVYSDYPPLATDLRRRFDTFKAFNSVKNSWLNLYSSACCLPVSTAYHIKNPIGGVFFTDSPEHLLGYSRDLDTDVVIDKLRSAKTSIDIEHLAIVPTTRVDGNSYYWPDIYNSIIEAAINRGVKIRLLVGNWDKNDVYSMATAESLDALCVQNDLSVKVFTIQNNTKLLIVDDEYVHITSANFDGTHYQNHGFVSFNSIDKQLVSEAKKIFERDWVSSHSKSLKI</sequence>
<proteinExistence type="inferred from homology"/>
<organismHost>
    <name type="scientific">Homo sapiens</name>
    <name type="common">Human</name>
    <dbReference type="NCBI Taxonomy" id="9606"/>
</organismHost>
<comment type="function">
    <text evidence="1">Major envelope protein that plays a role in the biogenesis of the viral double membrane and in egress of virus from the host cell. Produces the wrapped form of virus that is required for cell-to-cell spread. Acts as a lipase with broad specificity including phospholipase C, phospholipase A, and triacylglycerol lipase activities.</text>
</comment>
<comment type="catalytic activity">
    <reaction evidence="1">
        <text>a 1,2-diacyl-sn-glycero-3-phosphocholine + H2O = a 1,2-diacyl-sn-glycero-3-phosphate + choline + H(+)</text>
        <dbReference type="Rhea" id="RHEA:14445"/>
        <dbReference type="ChEBI" id="CHEBI:15354"/>
        <dbReference type="ChEBI" id="CHEBI:15377"/>
        <dbReference type="ChEBI" id="CHEBI:15378"/>
        <dbReference type="ChEBI" id="CHEBI:57643"/>
        <dbReference type="ChEBI" id="CHEBI:58608"/>
        <dbReference type="EC" id="3.1.4.4"/>
    </reaction>
    <physiologicalReaction direction="left-to-right" evidence="1">
        <dbReference type="Rhea" id="RHEA:14446"/>
    </physiologicalReaction>
</comment>
<comment type="subunit">
    <text evidence="1">Interacts with protein OPG190.</text>
</comment>
<comment type="subcellular location">
    <subcellularLocation>
        <location evidence="1">Virion membrane</location>
        <topology evidence="1">Lipid-anchor</topology>
    </subcellularLocation>
    <subcellularLocation>
        <location evidence="1">Host Golgi apparatus</location>
        <location evidence="1">Host trans-Golgi network</location>
    </subcellularLocation>
    <subcellularLocation>
        <location evidence="1">Host endoplasmic reticulum membrane</location>
        <topology evidence="1">Lipid-anchor</topology>
        <orientation evidence="1">Cytoplasmic side</orientation>
    </subcellularLocation>
    <text evidence="1">Component of the inner side of the enveloped virion (EV) membrane. F13 is associated post-translationally with membranes.</text>
</comment>
<comment type="induction">
    <text evidence="1">Expressed in the intermediate phase of the viral replicative cycle.</text>
</comment>
<comment type="domain">
    <text evidence="1">Late-budding domains (L domains) are short sequence motifs essential for viral particle budding. They recruit proteins of the host ESCRT machinery (Endosomal Sorting Complex Required for Transport) or ESCRT-associated proteins. F13 contains one L domain: a YPPL motif, which might interact with PDCD6IP/AIP1.</text>
</comment>
<comment type="PTM">
    <text evidence="1">Palmitoylated. Attachment of the palmitate moiety is essential for correct intracellular targeting and protein function.</text>
</comment>
<comment type="similarity">
    <text evidence="3">Belongs to the orthopoxvirus OPG057 family.</text>
</comment>
<dbReference type="EC" id="3.1.1.-" evidence="1"/>
<dbReference type="EC" id="3.1.4.4" evidence="1"/>
<dbReference type="EMBL" id="X69198">
    <property type="protein sequence ID" value="CAA48978.1"/>
    <property type="molecule type" value="Genomic_DNA"/>
</dbReference>
<dbReference type="PIR" id="H36840">
    <property type="entry name" value="H36840"/>
</dbReference>
<dbReference type="RefSeq" id="NP_042081.1">
    <property type="nucleotide sequence ID" value="NC_001611.1"/>
</dbReference>
<dbReference type="SMR" id="P33815"/>
<dbReference type="ChEMBL" id="CHEMBL5308522"/>
<dbReference type="DrugBank" id="DB12020">
    <property type="generic name" value="Tecovirimat"/>
</dbReference>
<dbReference type="DrugCentral" id="P33815"/>
<dbReference type="GeneID" id="1486573"/>
<dbReference type="KEGG" id="vg:1486573"/>
<dbReference type="Proteomes" id="UP000002060">
    <property type="component" value="Segment"/>
</dbReference>
<dbReference type="GO" id="GO:0044167">
    <property type="term" value="C:host cell endoplasmic reticulum membrane"/>
    <property type="evidence" value="ECO:0000250"/>
    <property type="project" value="UniProtKB"/>
</dbReference>
<dbReference type="GO" id="GO:0044177">
    <property type="term" value="C:host cell Golgi apparatus"/>
    <property type="evidence" value="ECO:0007669"/>
    <property type="project" value="UniProtKB-SubCell"/>
</dbReference>
<dbReference type="GO" id="GO:0016020">
    <property type="term" value="C:membrane"/>
    <property type="evidence" value="ECO:0007669"/>
    <property type="project" value="UniProtKB-KW"/>
</dbReference>
<dbReference type="GO" id="GO:0019031">
    <property type="term" value="C:viral envelope"/>
    <property type="evidence" value="ECO:0007669"/>
    <property type="project" value="UniProtKB-KW"/>
</dbReference>
<dbReference type="GO" id="GO:0036338">
    <property type="term" value="C:viral membrane"/>
    <property type="evidence" value="ECO:0000250"/>
    <property type="project" value="UniProtKB"/>
</dbReference>
<dbReference type="GO" id="GO:0055036">
    <property type="term" value="C:virion membrane"/>
    <property type="evidence" value="ECO:0007669"/>
    <property type="project" value="UniProtKB-SubCell"/>
</dbReference>
<dbReference type="GO" id="GO:0016787">
    <property type="term" value="F:hydrolase activity"/>
    <property type="evidence" value="ECO:0007669"/>
    <property type="project" value="UniProtKB-KW"/>
</dbReference>
<dbReference type="GO" id="GO:0039702">
    <property type="term" value="P:viral budding via host ESCRT complex"/>
    <property type="evidence" value="ECO:0007669"/>
    <property type="project" value="UniProtKB-KW"/>
</dbReference>
<dbReference type="CDD" id="cd09106">
    <property type="entry name" value="PLDc_vPLD3_4_5_like_1"/>
    <property type="match status" value="1"/>
</dbReference>
<dbReference type="CDD" id="cd09107">
    <property type="entry name" value="PLDc_vPLD3_4_5_like_2"/>
    <property type="match status" value="1"/>
</dbReference>
<dbReference type="FunFam" id="3.30.870.10:FF:000040">
    <property type="entry name" value="Envelope phospholipase F13"/>
    <property type="match status" value="1"/>
</dbReference>
<dbReference type="FunFam" id="3.30.870.10:FF:000041">
    <property type="entry name" value="Envelope phospholipase F13"/>
    <property type="match status" value="1"/>
</dbReference>
<dbReference type="Gene3D" id="3.30.870.10">
    <property type="entry name" value="Endonuclease Chain A"/>
    <property type="match status" value="2"/>
</dbReference>
<dbReference type="InterPro" id="IPR050874">
    <property type="entry name" value="Diverse_PLD-related"/>
</dbReference>
<dbReference type="InterPro" id="IPR032803">
    <property type="entry name" value="PLDc_3"/>
</dbReference>
<dbReference type="InterPro" id="IPR001736">
    <property type="entry name" value="PLipase_D/transphosphatidylase"/>
</dbReference>
<dbReference type="PANTHER" id="PTHR10185:SF17">
    <property type="entry name" value="GM01519P-RELATED"/>
    <property type="match status" value="1"/>
</dbReference>
<dbReference type="PANTHER" id="PTHR10185">
    <property type="entry name" value="PHOSPHOLIPASE D - RELATED"/>
    <property type="match status" value="1"/>
</dbReference>
<dbReference type="Pfam" id="PF13918">
    <property type="entry name" value="PLDc_3"/>
    <property type="match status" value="1"/>
</dbReference>
<dbReference type="SMART" id="SM00155">
    <property type="entry name" value="PLDc"/>
    <property type="match status" value="2"/>
</dbReference>
<dbReference type="SUPFAM" id="SSF56024">
    <property type="entry name" value="Phospholipase D/nuclease"/>
    <property type="match status" value="2"/>
</dbReference>
<dbReference type="PROSITE" id="PS50035">
    <property type="entry name" value="PLD"/>
    <property type="match status" value="1"/>
</dbReference>
<evidence type="ECO:0000250" key="1">
    <source>
        <dbReference type="UniProtKB" id="P04021"/>
    </source>
</evidence>
<evidence type="ECO:0000255" key="2">
    <source>
        <dbReference type="PROSITE-ProRule" id="PRU00153"/>
    </source>
</evidence>
<evidence type="ECO:0000305" key="3"/>